<keyword id="KW-0687">Ribonucleoprotein</keyword>
<keyword id="KW-0689">Ribosomal protein</keyword>
<keyword id="KW-0694">RNA-binding</keyword>
<keyword id="KW-0699">rRNA-binding</keyword>
<keyword id="KW-0820">tRNA-binding</keyword>
<sequence>MFGLKQFYQNEVRTKLAQELDIKNPMLLPKLEKIVISVGAGAYAKDMKIMQNIAQTISLIAGQKAVITKAKKSVAGFKIREGMAVGAKVTLRNKRMYNFLEKLIVISLPRVKDFRGISRNGFDGHGNYTFGINEQLIFPEVVYDDIMVSHGMNITMVTSTDNDKEAFKLLELLGLPFAKVR</sequence>
<protein>
    <recommendedName>
        <fullName evidence="1">Large ribosomal subunit protein uL5</fullName>
    </recommendedName>
    <alternativeName>
        <fullName evidence="2">50S ribosomal protein L5</fullName>
    </alternativeName>
</protein>
<organism>
    <name type="scientific">Helicobacter pylori (strain P12)</name>
    <dbReference type="NCBI Taxonomy" id="570508"/>
    <lineage>
        <taxon>Bacteria</taxon>
        <taxon>Pseudomonadati</taxon>
        <taxon>Campylobacterota</taxon>
        <taxon>Epsilonproteobacteria</taxon>
        <taxon>Campylobacterales</taxon>
        <taxon>Helicobacteraceae</taxon>
        <taxon>Helicobacter</taxon>
    </lineage>
</organism>
<gene>
    <name evidence="1" type="primary">rplE</name>
    <name type="ordered locus">HPP12_1271</name>
</gene>
<name>RL5_HELP2</name>
<evidence type="ECO:0000255" key="1">
    <source>
        <dbReference type="HAMAP-Rule" id="MF_01333"/>
    </source>
</evidence>
<evidence type="ECO:0000305" key="2"/>
<accession>B6JNE5</accession>
<comment type="function">
    <text evidence="1">This is one of the proteins that bind and probably mediate the attachment of the 5S RNA into the large ribosomal subunit, where it forms part of the central protuberance. In the 70S ribosome it contacts protein S13 of the 30S subunit (bridge B1b), connecting the 2 subunits; this bridge is implicated in subunit movement. Contacts the P site tRNA; the 5S rRNA and some of its associated proteins might help stabilize positioning of ribosome-bound tRNAs.</text>
</comment>
<comment type="subunit">
    <text evidence="1">Part of the 50S ribosomal subunit; part of the 5S rRNA/L5/L18/L25 subcomplex. Contacts the 5S rRNA and the P site tRNA. Forms a bridge to the 30S subunit in the 70S ribosome.</text>
</comment>
<comment type="similarity">
    <text evidence="1">Belongs to the universal ribosomal protein uL5 family.</text>
</comment>
<dbReference type="EMBL" id="CP001217">
    <property type="protein sequence ID" value="ACJ08423.1"/>
    <property type="molecule type" value="Genomic_DNA"/>
</dbReference>
<dbReference type="SMR" id="B6JNE5"/>
<dbReference type="KEGG" id="hpp:HPP12_1271"/>
<dbReference type="HOGENOM" id="CLU_061015_2_1_7"/>
<dbReference type="Proteomes" id="UP000008198">
    <property type="component" value="Chromosome"/>
</dbReference>
<dbReference type="GO" id="GO:1990904">
    <property type="term" value="C:ribonucleoprotein complex"/>
    <property type="evidence" value="ECO:0007669"/>
    <property type="project" value="UniProtKB-KW"/>
</dbReference>
<dbReference type="GO" id="GO:0005840">
    <property type="term" value="C:ribosome"/>
    <property type="evidence" value="ECO:0007669"/>
    <property type="project" value="UniProtKB-KW"/>
</dbReference>
<dbReference type="GO" id="GO:0019843">
    <property type="term" value="F:rRNA binding"/>
    <property type="evidence" value="ECO:0007669"/>
    <property type="project" value="UniProtKB-UniRule"/>
</dbReference>
<dbReference type="GO" id="GO:0003735">
    <property type="term" value="F:structural constituent of ribosome"/>
    <property type="evidence" value="ECO:0007669"/>
    <property type="project" value="InterPro"/>
</dbReference>
<dbReference type="GO" id="GO:0000049">
    <property type="term" value="F:tRNA binding"/>
    <property type="evidence" value="ECO:0007669"/>
    <property type="project" value="UniProtKB-UniRule"/>
</dbReference>
<dbReference type="GO" id="GO:0006412">
    <property type="term" value="P:translation"/>
    <property type="evidence" value="ECO:0007669"/>
    <property type="project" value="UniProtKB-UniRule"/>
</dbReference>
<dbReference type="FunFam" id="3.30.1440.10:FF:000001">
    <property type="entry name" value="50S ribosomal protein L5"/>
    <property type="match status" value="1"/>
</dbReference>
<dbReference type="Gene3D" id="3.30.1440.10">
    <property type="match status" value="1"/>
</dbReference>
<dbReference type="HAMAP" id="MF_01333_B">
    <property type="entry name" value="Ribosomal_uL5_B"/>
    <property type="match status" value="1"/>
</dbReference>
<dbReference type="InterPro" id="IPR002132">
    <property type="entry name" value="Ribosomal_uL5"/>
</dbReference>
<dbReference type="InterPro" id="IPR020930">
    <property type="entry name" value="Ribosomal_uL5_bac-type"/>
</dbReference>
<dbReference type="InterPro" id="IPR031309">
    <property type="entry name" value="Ribosomal_uL5_C"/>
</dbReference>
<dbReference type="InterPro" id="IPR020929">
    <property type="entry name" value="Ribosomal_uL5_CS"/>
</dbReference>
<dbReference type="InterPro" id="IPR022803">
    <property type="entry name" value="Ribosomal_uL5_dom_sf"/>
</dbReference>
<dbReference type="InterPro" id="IPR031310">
    <property type="entry name" value="Ribosomal_uL5_N"/>
</dbReference>
<dbReference type="NCBIfam" id="NF000585">
    <property type="entry name" value="PRK00010.1"/>
    <property type="match status" value="1"/>
</dbReference>
<dbReference type="PANTHER" id="PTHR11994">
    <property type="entry name" value="60S RIBOSOMAL PROTEIN L11-RELATED"/>
    <property type="match status" value="1"/>
</dbReference>
<dbReference type="Pfam" id="PF00281">
    <property type="entry name" value="Ribosomal_L5"/>
    <property type="match status" value="1"/>
</dbReference>
<dbReference type="Pfam" id="PF00673">
    <property type="entry name" value="Ribosomal_L5_C"/>
    <property type="match status" value="1"/>
</dbReference>
<dbReference type="PIRSF" id="PIRSF002161">
    <property type="entry name" value="Ribosomal_L5"/>
    <property type="match status" value="1"/>
</dbReference>
<dbReference type="SUPFAM" id="SSF55282">
    <property type="entry name" value="RL5-like"/>
    <property type="match status" value="1"/>
</dbReference>
<dbReference type="PROSITE" id="PS00358">
    <property type="entry name" value="RIBOSOMAL_L5"/>
    <property type="match status" value="1"/>
</dbReference>
<feature type="chain" id="PRO_1000142409" description="Large ribosomal subunit protein uL5">
    <location>
        <begin position="1"/>
        <end position="181"/>
    </location>
</feature>
<proteinExistence type="inferred from homology"/>
<reference key="1">
    <citation type="submission" date="2008-10" db="EMBL/GenBank/DDBJ databases">
        <title>The complete genome sequence of Helicobacter pylori strain P12.</title>
        <authorList>
            <person name="Fischer W."/>
            <person name="Windhager L."/>
            <person name="Karnholz A."/>
            <person name="Zeiller M."/>
            <person name="Zimmer R."/>
            <person name="Haas R."/>
        </authorList>
    </citation>
    <scope>NUCLEOTIDE SEQUENCE [LARGE SCALE GENOMIC DNA]</scope>
    <source>
        <strain>P12</strain>
    </source>
</reference>